<name>RL33_SALPB</name>
<organism>
    <name type="scientific">Salmonella paratyphi B (strain ATCC BAA-1250 / SPB7)</name>
    <dbReference type="NCBI Taxonomy" id="1016998"/>
    <lineage>
        <taxon>Bacteria</taxon>
        <taxon>Pseudomonadati</taxon>
        <taxon>Pseudomonadota</taxon>
        <taxon>Gammaproteobacteria</taxon>
        <taxon>Enterobacterales</taxon>
        <taxon>Enterobacteriaceae</taxon>
        <taxon>Salmonella</taxon>
    </lineage>
</organism>
<gene>
    <name evidence="1" type="primary">rpmG</name>
    <name type="ordered locus">SPAB_04626</name>
</gene>
<comment type="similarity">
    <text evidence="1">Belongs to the bacterial ribosomal protein bL33 family.</text>
</comment>
<dbReference type="EMBL" id="CP000886">
    <property type="protein sequence ID" value="ABX69939.1"/>
    <property type="molecule type" value="Genomic_DNA"/>
</dbReference>
<dbReference type="RefSeq" id="WP_001051798.1">
    <property type="nucleotide sequence ID" value="NC_010102.1"/>
</dbReference>
<dbReference type="SMR" id="A9MVN1"/>
<dbReference type="GeneID" id="97607673"/>
<dbReference type="KEGG" id="spq:SPAB_04626"/>
<dbReference type="PATRIC" id="fig|1016998.12.peg.4352"/>
<dbReference type="HOGENOM" id="CLU_190949_1_1_6"/>
<dbReference type="BioCyc" id="SENT1016998:SPAB_RS18830-MONOMER"/>
<dbReference type="Proteomes" id="UP000008556">
    <property type="component" value="Chromosome"/>
</dbReference>
<dbReference type="GO" id="GO:0022625">
    <property type="term" value="C:cytosolic large ribosomal subunit"/>
    <property type="evidence" value="ECO:0007669"/>
    <property type="project" value="TreeGrafter"/>
</dbReference>
<dbReference type="GO" id="GO:0003735">
    <property type="term" value="F:structural constituent of ribosome"/>
    <property type="evidence" value="ECO:0007669"/>
    <property type="project" value="InterPro"/>
</dbReference>
<dbReference type="GO" id="GO:0006412">
    <property type="term" value="P:translation"/>
    <property type="evidence" value="ECO:0007669"/>
    <property type="project" value="UniProtKB-UniRule"/>
</dbReference>
<dbReference type="FunFam" id="2.20.28.120:FF:000001">
    <property type="entry name" value="50S ribosomal protein L33"/>
    <property type="match status" value="1"/>
</dbReference>
<dbReference type="Gene3D" id="2.20.28.120">
    <property type="entry name" value="Ribosomal protein L33"/>
    <property type="match status" value="1"/>
</dbReference>
<dbReference type="HAMAP" id="MF_00294">
    <property type="entry name" value="Ribosomal_bL33"/>
    <property type="match status" value="1"/>
</dbReference>
<dbReference type="InterPro" id="IPR001705">
    <property type="entry name" value="Ribosomal_bL33"/>
</dbReference>
<dbReference type="InterPro" id="IPR018264">
    <property type="entry name" value="Ribosomal_bL33_CS"/>
</dbReference>
<dbReference type="InterPro" id="IPR038584">
    <property type="entry name" value="Ribosomal_bL33_sf"/>
</dbReference>
<dbReference type="InterPro" id="IPR011332">
    <property type="entry name" value="Ribosomal_zn-bd"/>
</dbReference>
<dbReference type="NCBIfam" id="NF001860">
    <property type="entry name" value="PRK00595.1"/>
    <property type="match status" value="1"/>
</dbReference>
<dbReference type="NCBIfam" id="TIGR01023">
    <property type="entry name" value="rpmG_bact"/>
    <property type="match status" value="1"/>
</dbReference>
<dbReference type="PANTHER" id="PTHR15238">
    <property type="entry name" value="54S RIBOSOMAL PROTEIN L39, MITOCHONDRIAL"/>
    <property type="match status" value="1"/>
</dbReference>
<dbReference type="PANTHER" id="PTHR15238:SF1">
    <property type="entry name" value="LARGE RIBOSOMAL SUBUNIT PROTEIN BL33M"/>
    <property type="match status" value="1"/>
</dbReference>
<dbReference type="Pfam" id="PF00471">
    <property type="entry name" value="Ribosomal_L33"/>
    <property type="match status" value="1"/>
</dbReference>
<dbReference type="SUPFAM" id="SSF57829">
    <property type="entry name" value="Zn-binding ribosomal proteins"/>
    <property type="match status" value="1"/>
</dbReference>
<dbReference type="PROSITE" id="PS00582">
    <property type="entry name" value="RIBOSOMAL_L33"/>
    <property type="match status" value="1"/>
</dbReference>
<accession>A9MVN1</accession>
<evidence type="ECO:0000255" key="1">
    <source>
        <dbReference type="HAMAP-Rule" id="MF_00294"/>
    </source>
</evidence>
<evidence type="ECO:0000305" key="2"/>
<keyword id="KW-0687">Ribonucleoprotein</keyword>
<keyword id="KW-0689">Ribosomal protein</keyword>
<proteinExistence type="inferred from homology"/>
<feature type="chain" id="PRO_1000078923" description="Large ribosomal subunit protein bL33">
    <location>
        <begin position="1"/>
        <end position="55"/>
    </location>
</feature>
<sequence length="55" mass="6372">MAKGIREKIKLVSSAGTGHFYTTTKNKRTKPEKLELKKFDPVVRQHVIYKEAKIK</sequence>
<reference key="1">
    <citation type="submission" date="2007-11" db="EMBL/GenBank/DDBJ databases">
        <authorList>
            <consortium name="The Salmonella enterica serovar Paratyphi B Genome Sequencing Project"/>
            <person name="McClelland M."/>
            <person name="Sanderson E.K."/>
            <person name="Porwollik S."/>
            <person name="Spieth J."/>
            <person name="Clifton W.S."/>
            <person name="Fulton R."/>
            <person name="Cordes M."/>
            <person name="Wollam A."/>
            <person name="Shah N."/>
            <person name="Pepin K."/>
            <person name="Bhonagiri V."/>
            <person name="Nash W."/>
            <person name="Johnson M."/>
            <person name="Thiruvilangam P."/>
            <person name="Wilson R."/>
        </authorList>
    </citation>
    <scope>NUCLEOTIDE SEQUENCE [LARGE SCALE GENOMIC DNA]</scope>
    <source>
        <strain>ATCC BAA-1250 / SPB7</strain>
    </source>
</reference>
<protein>
    <recommendedName>
        <fullName evidence="1">Large ribosomal subunit protein bL33</fullName>
    </recommendedName>
    <alternativeName>
        <fullName evidence="2">50S ribosomal protein L33</fullName>
    </alternativeName>
</protein>